<gene>
    <name evidence="1" type="primary">rplA</name>
    <name type="ordered locus">Erum1690</name>
    <name type="ordered locus">ERWE_CDS_01680</name>
</gene>
<feature type="chain" id="PRO_0000307654" description="Large ribosomal subunit protein uL1">
    <location>
        <begin position="1"/>
        <end position="220"/>
    </location>
</feature>
<protein>
    <recommendedName>
        <fullName evidence="1">Large ribosomal subunit protein uL1</fullName>
    </recommendedName>
    <alternativeName>
        <fullName evidence="2">50S ribosomal protein L1</fullName>
    </alternativeName>
</protein>
<sequence length="220" mass="23865">MSLLANDEVYDIVSGFKKVIESAKANFCESVDVAINLNINSSKSDEQVRGAVVLPKGLGREVKVAVFAKGGHLDAAKEAMADIVGDEELIEEIKRKKCKLDVDWCLTTPDFMSSVSSIAKILGPRGLMPNPKFNTVTFELSKAIKVIKSGQIRFKSDKAGIVHAKIGNVKFSIEDLLQNFNAVIGAIKQSKPASVKGVYFKDVFIVSTMGKSVKVESLNN</sequence>
<keyword id="KW-0678">Repressor</keyword>
<keyword id="KW-0687">Ribonucleoprotein</keyword>
<keyword id="KW-0689">Ribosomal protein</keyword>
<keyword id="KW-0694">RNA-binding</keyword>
<keyword id="KW-0699">rRNA-binding</keyword>
<keyword id="KW-0810">Translation regulation</keyword>
<keyword id="KW-0820">tRNA-binding</keyword>
<evidence type="ECO:0000255" key="1">
    <source>
        <dbReference type="HAMAP-Rule" id="MF_01318"/>
    </source>
</evidence>
<evidence type="ECO:0000305" key="2"/>
<name>RL1_EHRRW</name>
<accession>Q5HC08</accession>
<accession>Q5FCV8</accession>
<comment type="function">
    <text evidence="1">Binds directly to 23S rRNA. The L1 stalk is quite mobile in the ribosome, and is involved in E site tRNA release.</text>
</comment>
<comment type="function">
    <text evidence="1">Protein L1 is also a translational repressor protein, it controls the translation of the L11 operon by binding to its mRNA.</text>
</comment>
<comment type="subunit">
    <text evidence="1">Part of the 50S ribosomal subunit.</text>
</comment>
<comment type="similarity">
    <text evidence="1">Belongs to the universal ribosomal protein uL1 family.</text>
</comment>
<comment type="sequence caution" evidence="2">
    <conflict type="frameshift">
        <sequence resource="EMBL-CDS" id="CAI26662"/>
    </conflict>
</comment>
<reference key="1">
    <citation type="journal article" date="2005" name="Proc. Natl. Acad. Sci. U.S.A.">
        <title>The genome of the heartwater agent Ehrlichia ruminantium contains multiple tandem repeats of actively variable copy number.</title>
        <authorList>
            <person name="Collins N.E."/>
            <person name="Liebenberg J."/>
            <person name="de Villiers E.P."/>
            <person name="Brayton K.A."/>
            <person name="Louw E."/>
            <person name="Pretorius A."/>
            <person name="Faber F.E."/>
            <person name="van Heerden H."/>
            <person name="Josemans A."/>
            <person name="van Kleef M."/>
            <person name="Steyn H.C."/>
            <person name="van Strijp M.F."/>
            <person name="Zweygarth E."/>
            <person name="Jongejan F."/>
            <person name="Maillard J.C."/>
            <person name="Berthier D."/>
            <person name="Botha M."/>
            <person name="Joubert F."/>
            <person name="Corton C.H."/>
            <person name="Thomson N.R."/>
            <person name="Allsopp M.T."/>
            <person name="Allsopp B.A."/>
        </authorList>
    </citation>
    <scope>NUCLEOTIDE SEQUENCE [LARGE SCALE GENOMIC DNA]</scope>
    <source>
        <strain>Welgevonden</strain>
    </source>
</reference>
<reference key="2">
    <citation type="journal article" date="2006" name="J. Bacteriol.">
        <title>Comparative genomic analysis of three strains of Ehrlichia ruminantium reveals an active process of genome size plasticity.</title>
        <authorList>
            <person name="Frutos R."/>
            <person name="Viari A."/>
            <person name="Ferraz C."/>
            <person name="Morgat A."/>
            <person name="Eychenie S."/>
            <person name="Kandassamy Y."/>
            <person name="Chantal I."/>
            <person name="Bensaid A."/>
            <person name="Coissac E."/>
            <person name="Vachiery N."/>
            <person name="Demaille J."/>
            <person name="Martinez D."/>
        </authorList>
    </citation>
    <scope>NUCLEOTIDE SEQUENCE [LARGE SCALE GENOMIC DNA]</scope>
    <source>
        <strain>Welgevonden</strain>
    </source>
</reference>
<dbReference type="EMBL" id="CR767821">
    <property type="protein sequence ID" value="CAH57885.1"/>
    <property type="molecule type" value="Genomic_DNA"/>
</dbReference>
<dbReference type="EMBL" id="CR925678">
    <property type="protein sequence ID" value="CAI26662.1"/>
    <property type="status" value="ALT_FRAME"/>
    <property type="molecule type" value="Genomic_DNA"/>
</dbReference>
<dbReference type="RefSeq" id="WP_011154853.1">
    <property type="nucleotide sequence ID" value="NC_005295.2"/>
</dbReference>
<dbReference type="SMR" id="Q5HC08"/>
<dbReference type="GeneID" id="33058330"/>
<dbReference type="KEGG" id="eru:Erum1690"/>
<dbReference type="KEGG" id="erw:ERWE_CDS_01680"/>
<dbReference type="eggNOG" id="COG0081">
    <property type="taxonomic scope" value="Bacteria"/>
</dbReference>
<dbReference type="HOGENOM" id="CLU_062853_0_0_5"/>
<dbReference type="Proteomes" id="UP000001021">
    <property type="component" value="Chromosome"/>
</dbReference>
<dbReference type="GO" id="GO:0015934">
    <property type="term" value="C:large ribosomal subunit"/>
    <property type="evidence" value="ECO:0007669"/>
    <property type="project" value="InterPro"/>
</dbReference>
<dbReference type="GO" id="GO:0019843">
    <property type="term" value="F:rRNA binding"/>
    <property type="evidence" value="ECO:0007669"/>
    <property type="project" value="UniProtKB-UniRule"/>
</dbReference>
<dbReference type="GO" id="GO:0003735">
    <property type="term" value="F:structural constituent of ribosome"/>
    <property type="evidence" value="ECO:0007669"/>
    <property type="project" value="InterPro"/>
</dbReference>
<dbReference type="GO" id="GO:0000049">
    <property type="term" value="F:tRNA binding"/>
    <property type="evidence" value="ECO:0007669"/>
    <property type="project" value="UniProtKB-KW"/>
</dbReference>
<dbReference type="GO" id="GO:0006417">
    <property type="term" value="P:regulation of translation"/>
    <property type="evidence" value="ECO:0007669"/>
    <property type="project" value="UniProtKB-KW"/>
</dbReference>
<dbReference type="GO" id="GO:0006412">
    <property type="term" value="P:translation"/>
    <property type="evidence" value="ECO:0007669"/>
    <property type="project" value="UniProtKB-UniRule"/>
</dbReference>
<dbReference type="CDD" id="cd00403">
    <property type="entry name" value="Ribosomal_L1"/>
    <property type="match status" value="1"/>
</dbReference>
<dbReference type="FunFam" id="3.40.50.790:FF:000001">
    <property type="entry name" value="50S ribosomal protein L1"/>
    <property type="match status" value="1"/>
</dbReference>
<dbReference type="Gene3D" id="3.30.190.20">
    <property type="match status" value="1"/>
</dbReference>
<dbReference type="Gene3D" id="3.40.50.790">
    <property type="match status" value="1"/>
</dbReference>
<dbReference type="HAMAP" id="MF_01318_B">
    <property type="entry name" value="Ribosomal_uL1_B"/>
    <property type="match status" value="1"/>
</dbReference>
<dbReference type="InterPro" id="IPR005878">
    <property type="entry name" value="Ribosom_uL1_bac-type"/>
</dbReference>
<dbReference type="InterPro" id="IPR002143">
    <property type="entry name" value="Ribosomal_uL1"/>
</dbReference>
<dbReference type="InterPro" id="IPR023674">
    <property type="entry name" value="Ribosomal_uL1-like"/>
</dbReference>
<dbReference type="InterPro" id="IPR028364">
    <property type="entry name" value="Ribosomal_uL1/biogenesis"/>
</dbReference>
<dbReference type="InterPro" id="IPR016095">
    <property type="entry name" value="Ribosomal_uL1_3-a/b-sand"/>
</dbReference>
<dbReference type="InterPro" id="IPR023673">
    <property type="entry name" value="Ribosomal_uL1_CS"/>
</dbReference>
<dbReference type="NCBIfam" id="TIGR01169">
    <property type="entry name" value="rplA_bact"/>
    <property type="match status" value="1"/>
</dbReference>
<dbReference type="PANTHER" id="PTHR36427">
    <property type="entry name" value="54S RIBOSOMAL PROTEIN L1, MITOCHONDRIAL"/>
    <property type="match status" value="1"/>
</dbReference>
<dbReference type="PANTHER" id="PTHR36427:SF3">
    <property type="entry name" value="LARGE RIBOSOMAL SUBUNIT PROTEIN UL1M"/>
    <property type="match status" value="1"/>
</dbReference>
<dbReference type="Pfam" id="PF00687">
    <property type="entry name" value="Ribosomal_L1"/>
    <property type="match status" value="1"/>
</dbReference>
<dbReference type="PIRSF" id="PIRSF002155">
    <property type="entry name" value="Ribosomal_L1"/>
    <property type="match status" value="1"/>
</dbReference>
<dbReference type="SUPFAM" id="SSF56808">
    <property type="entry name" value="Ribosomal protein L1"/>
    <property type="match status" value="1"/>
</dbReference>
<dbReference type="PROSITE" id="PS01199">
    <property type="entry name" value="RIBOSOMAL_L1"/>
    <property type="match status" value="1"/>
</dbReference>
<proteinExistence type="inferred from homology"/>
<organism>
    <name type="scientific">Ehrlichia ruminantium (strain Welgevonden)</name>
    <dbReference type="NCBI Taxonomy" id="254945"/>
    <lineage>
        <taxon>Bacteria</taxon>
        <taxon>Pseudomonadati</taxon>
        <taxon>Pseudomonadota</taxon>
        <taxon>Alphaproteobacteria</taxon>
        <taxon>Rickettsiales</taxon>
        <taxon>Anaplasmataceae</taxon>
        <taxon>Ehrlichia</taxon>
    </lineage>
</organism>